<feature type="initiator methionine" description="Removed" evidence="1">
    <location>
        <position position="1"/>
    </location>
</feature>
<feature type="chain" id="PRO_0000053373" description="Myoglobin">
    <location>
        <begin position="2"/>
        <end position="146"/>
    </location>
</feature>
<feature type="domain" description="Globin" evidence="6">
    <location>
        <begin position="2"/>
        <end position="141"/>
    </location>
</feature>
<feature type="binding site" evidence="5">
    <location>
        <position position="60"/>
    </location>
    <ligand>
        <name>nitrite</name>
        <dbReference type="ChEBI" id="CHEBI:16301"/>
    </ligand>
</feature>
<feature type="binding site" evidence="4 6">
    <location>
        <position position="60"/>
    </location>
    <ligand>
        <name>O2</name>
        <dbReference type="ChEBI" id="CHEBI:15379"/>
    </ligand>
</feature>
<feature type="binding site" description="proximal binding residue" evidence="2">
    <location>
        <position position="89"/>
    </location>
    <ligand>
        <name>heme b</name>
        <dbReference type="ChEBI" id="CHEBI:60344"/>
    </ligand>
    <ligandPart>
        <name>Fe</name>
        <dbReference type="ChEBI" id="CHEBI:18248"/>
    </ligandPart>
</feature>
<feature type="sequence conflict" description="In Ref. 1; CAF31356." evidence="7" ref="1">
    <original>T</original>
    <variation>A</variation>
    <location>
        <position position="119"/>
    </location>
</feature>
<accession>Q701N9</accession>
<accession>Q4SZ48</accession>
<keyword id="KW-0963">Cytoplasm</keyword>
<keyword id="KW-0349">Heme</keyword>
<keyword id="KW-0408">Iron</keyword>
<keyword id="KW-0479">Metal-binding</keyword>
<keyword id="KW-0514">Muscle protein</keyword>
<keyword id="KW-0560">Oxidoreductase</keyword>
<keyword id="KW-0561">Oxygen transport</keyword>
<keyword id="KW-1185">Reference proteome</keyword>
<keyword id="KW-0813">Transport</keyword>
<evidence type="ECO:0000250" key="1"/>
<evidence type="ECO:0000250" key="2">
    <source>
        <dbReference type="UniProtKB" id="P02144"/>
    </source>
</evidence>
<evidence type="ECO:0000250" key="3">
    <source>
        <dbReference type="UniProtKB" id="P02185"/>
    </source>
</evidence>
<evidence type="ECO:0000250" key="4">
    <source>
        <dbReference type="UniProtKB" id="P02189"/>
    </source>
</evidence>
<evidence type="ECO:0000250" key="5">
    <source>
        <dbReference type="UniProtKB" id="P68082"/>
    </source>
</evidence>
<evidence type="ECO:0000255" key="6">
    <source>
        <dbReference type="PROSITE-ProRule" id="PRU00238"/>
    </source>
</evidence>
<evidence type="ECO:0000305" key="7"/>
<proteinExistence type="inferred from homology"/>
<reference key="1">
    <citation type="submission" date="2004-02" db="EMBL/GenBank/DDBJ databases">
        <title>Molecular evolution of globin genes in pufferfish.</title>
        <authorList>
            <person name="Fuchs C."/>
            <person name="Burmester T."/>
            <person name="Hankeln T."/>
        </authorList>
    </citation>
    <scope>NUCLEOTIDE SEQUENCE [GENOMIC DNA]</scope>
</reference>
<reference key="2">
    <citation type="journal article" date="2004" name="Nature">
        <title>Genome duplication in the teleost fish Tetraodon nigroviridis reveals the early vertebrate proto-karyotype.</title>
        <authorList>
            <person name="Jaillon O."/>
            <person name="Aury J.-M."/>
            <person name="Brunet F."/>
            <person name="Petit J.-L."/>
            <person name="Stange-Thomann N."/>
            <person name="Mauceli E."/>
            <person name="Bouneau L."/>
            <person name="Fischer C."/>
            <person name="Ozouf-Costaz C."/>
            <person name="Bernot A."/>
            <person name="Nicaud S."/>
            <person name="Jaffe D."/>
            <person name="Fisher S."/>
            <person name="Lutfalla G."/>
            <person name="Dossat C."/>
            <person name="Segurens B."/>
            <person name="Dasilva C."/>
            <person name="Salanoubat M."/>
            <person name="Levy M."/>
            <person name="Boudet N."/>
            <person name="Castellano S."/>
            <person name="Anthouard V."/>
            <person name="Jubin C."/>
            <person name="Castelli V."/>
            <person name="Katinka M."/>
            <person name="Vacherie B."/>
            <person name="Biemont C."/>
            <person name="Skalli Z."/>
            <person name="Cattolico L."/>
            <person name="Poulain J."/>
            <person name="De Berardinis V."/>
            <person name="Cruaud C."/>
            <person name="Duprat S."/>
            <person name="Brottier P."/>
            <person name="Coutanceau J.-P."/>
            <person name="Gouzy J."/>
            <person name="Parra G."/>
            <person name="Lardier G."/>
            <person name="Chapple C."/>
            <person name="McKernan K.J."/>
            <person name="McEwan P."/>
            <person name="Bosak S."/>
            <person name="Kellis M."/>
            <person name="Volff J.-N."/>
            <person name="Guigo R."/>
            <person name="Zody M.C."/>
            <person name="Mesirov J."/>
            <person name="Lindblad-Toh K."/>
            <person name="Birren B."/>
            <person name="Nusbaum C."/>
            <person name="Kahn D."/>
            <person name="Robinson-Rechavi M."/>
            <person name="Laudet V."/>
            <person name="Schachter V."/>
            <person name="Quetier F."/>
            <person name="Saurin W."/>
            <person name="Scarpelli C."/>
            <person name="Wincker P."/>
            <person name="Lander E.S."/>
            <person name="Weissenbach J."/>
            <person name="Roest Crollius H."/>
        </authorList>
    </citation>
    <scope>NUCLEOTIDE SEQUENCE [LARGE SCALE GENOMIC DNA]</scope>
</reference>
<sequence length="146" mass="15644">MGDFDMVLKFWGPVEADYSAHGGMVLTRLFTENPETQQLFPKFVGIAQSELAGNAAVSAHGATVLKKLGELLKAKGNHAAILQPLANSHATKHKIPIKNFKLIAEVIGKVMAEKAGLDTAGQQALRNIMATIIADIDATYKELGFS</sequence>
<comment type="function">
    <text evidence="2">Monomeric heme protein which primary function is to store oxygen and facilitate its diffusion within muscle tissues. Reversibly binds oxygen through a pentacoordinated heme iron and enables its timely and efficient release as needed during periods of heightened demand. Depending on the oxidative conditions of tissues and cells, and in addition to its ability to bind oxygen, it also has a nitrite reductase activity whereby it regulates the production of bioactive nitric oxide. Under stress conditions, like hypoxia and anoxia, it also protects cells against reactive oxygen species thanks to its pseudoperoxidase activity.</text>
</comment>
<comment type="catalytic activity">
    <reaction evidence="2">
        <text>Fe(III)-heme b-[protein] + nitric oxide + H2O = Fe(II)-heme b-[protein] + nitrite + 2 H(+)</text>
        <dbReference type="Rhea" id="RHEA:77711"/>
        <dbReference type="Rhea" id="RHEA-COMP:18975"/>
        <dbReference type="Rhea" id="RHEA-COMP:18976"/>
        <dbReference type="ChEBI" id="CHEBI:15377"/>
        <dbReference type="ChEBI" id="CHEBI:15378"/>
        <dbReference type="ChEBI" id="CHEBI:16301"/>
        <dbReference type="ChEBI" id="CHEBI:16480"/>
        <dbReference type="ChEBI" id="CHEBI:55376"/>
        <dbReference type="ChEBI" id="CHEBI:60344"/>
    </reaction>
    <physiologicalReaction direction="right-to-left" evidence="2">
        <dbReference type="Rhea" id="RHEA:77713"/>
    </physiologicalReaction>
</comment>
<comment type="catalytic activity">
    <reaction evidence="2">
        <text>H2O2 + AH2 = A + 2 H2O</text>
        <dbReference type="Rhea" id="RHEA:30275"/>
        <dbReference type="ChEBI" id="CHEBI:13193"/>
        <dbReference type="ChEBI" id="CHEBI:15377"/>
        <dbReference type="ChEBI" id="CHEBI:16240"/>
        <dbReference type="ChEBI" id="CHEBI:17499"/>
    </reaction>
</comment>
<comment type="subunit">
    <text evidence="3">Monomeric.</text>
</comment>
<comment type="subcellular location">
    <subcellularLocation>
        <location evidence="2">Cytoplasm</location>
        <location evidence="2">Sarcoplasm</location>
    </subcellularLocation>
</comment>
<comment type="similarity">
    <text evidence="6">Belongs to the globin family.</text>
</comment>
<gene>
    <name type="primary">mb</name>
    <name type="ORF">GSTENG00010013001</name>
</gene>
<name>MYG_TETNG</name>
<organism>
    <name type="scientific">Tetraodon nigroviridis</name>
    <name type="common">Spotted green pufferfish</name>
    <name type="synonym">Chelonodon nigroviridis</name>
    <dbReference type="NCBI Taxonomy" id="99883"/>
    <lineage>
        <taxon>Eukaryota</taxon>
        <taxon>Metazoa</taxon>
        <taxon>Chordata</taxon>
        <taxon>Craniata</taxon>
        <taxon>Vertebrata</taxon>
        <taxon>Euteleostomi</taxon>
        <taxon>Actinopterygii</taxon>
        <taxon>Neopterygii</taxon>
        <taxon>Teleostei</taxon>
        <taxon>Neoteleostei</taxon>
        <taxon>Acanthomorphata</taxon>
        <taxon>Eupercaria</taxon>
        <taxon>Tetraodontiformes</taxon>
        <taxon>Tetradontoidea</taxon>
        <taxon>Tetraodontidae</taxon>
        <taxon>Tetraodon</taxon>
    </lineage>
</organism>
<protein>
    <recommendedName>
        <fullName>Myoglobin</fullName>
    </recommendedName>
    <alternativeName>
        <fullName evidence="2">Nitrite reductase MB</fullName>
        <ecNumber evidence="2">1.7.-.-</ecNumber>
    </alternativeName>
    <alternativeName>
        <fullName evidence="2">Pseudoperoxidase MB</fullName>
        <ecNumber evidence="2">1.11.1.-</ecNumber>
    </alternativeName>
</protein>
<dbReference type="EC" id="1.7.-.-" evidence="2"/>
<dbReference type="EC" id="1.11.1.-" evidence="2"/>
<dbReference type="EMBL" id="AJ628044">
    <property type="protein sequence ID" value="CAF31356.1"/>
    <property type="molecule type" value="Genomic_DNA"/>
</dbReference>
<dbReference type="EMBL" id="CAAE01011832">
    <property type="protein sequence ID" value="CAF94084.1"/>
    <property type="molecule type" value="Genomic_DNA"/>
</dbReference>
<dbReference type="SMR" id="Q701N9"/>
<dbReference type="FunCoup" id="Q701N9">
    <property type="interactions" value="1171"/>
</dbReference>
<dbReference type="STRING" id="99883.ENSTNIP00000002229"/>
<dbReference type="Ensembl" id="ENSTNIT00000008383.1">
    <property type="protein sequence ID" value="ENSTNIP00000008217.1"/>
    <property type="gene ID" value="ENSTNIG00000005518.1"/>
</dbReference>
<dbReference type="KEGG" id="tng:GSTEN00010013G001"/>
<dbReference type="GeneTree" id="ENSGT00940000160809"/>
<dbReference type="HOGENOM" id="CLU_003827_18_0_1"/>
<dbReference type="InParanoid" id="Q701N9"/>
<dbReference type="OMA" id="VIIRMFQ"/>
<dbReference type="OrthoDB" id="6344802at2759"/>
<dbReference type="Proteomes" id="UP000007303">
    <property type="component" value="Unassembled WGS sequence"/>
</dbReference>
<dbReference type="GO" id="GO:0070062">
    <property type="term" value="C:extracellular exosome"/>
    <property type="evidence" value="ECO:0007669"/>
    <property type="project" value="TreeGrafter"/>
</dbReference>
<dbReference type="GO" id="GO:0016528">
    <property type="term" value="C:sarcoplasm"/>
    <property type="evidence" value="ECO:0000250"/>
    <property type="project" value="UniProtKB"/>
</dbReference>
<dbReference type="GO" id="GO:0020037">
    <property type="term" value="F:heme binding"/>
    <property type="evidence" value="ECO:0007669"/>
    <property type="project" value="InterPro"/>
</dbReference>
<dbReference type="GO" id="GO:0046872">
    <property type="term" value="F:metal ion binding"/>
    <property type="evidence" value="ECO:0007669"/>
    <property type="project" value="UniProtKB-KW"/>
</dbReference>
<dbReference type="GO" id="GO:0098809">
    <property type="term" value="F:nitrite reductase activity"/>
    <property type="evidence" value="ECO:0000250"/>
    <property type="project" value="UniProtKB"/>
</dbReference>
<dbReference type="GO" id="GO:0019825">
    <property type="term" value="F:oxygen binding"/>
    <property type="evidence" value="ECO:0007669"/>
    <property type="project" value="InterPro"/>
</dbReference>
<dbReference type="GO" id="GO:0005344">
    <property type="term" value="F:oxygen carrier activity"/>
    <property type="evidence" value="ECO:0000250"/>
    <property type="project" value="UniProtKB"/>
</dbReference>
<dbReference type="GO" id="GO:0004601">
    <property type="term" value="F:peroxidase activity"/>
    <property type="evidence" value="ECO:0000250"/>
    <property type="project" value="UniProtKB"/>
</dbReference>
<dbReference type="GO" id="GO:0019430">
    <property type="term" value="P:removal of superoxide radicals"/>
    <property type="evidence" value="ECO:0000250"/>
    <property type="project" value="UniProtKB"/>
</dbReference>
<dbReference type="Gene3D" id="6.10.140.2100">
    <property type="match status" value="1"/>
</dbReference>
<dbReference type="Gene3D" id="6.10.140.2110">
    <property type="match status" value="1"/>
</dbReference>
<dbReference type="InterPro" id="IPR000971">
    <property type="entry name" value="Globin"/>
</dbReference>
<dbReference type="InterPro" id="IPR009050">
    <property type="entry name" value="Globin-like_sf"/>
</dbReference>
<dbReference type="InterPro" id="IPR002335">
    <property type="entry name" value="Myoglobin"/>
</dbReference>
<dbReference type="PANTHER" id="PTHR47132">
    <property type="entry name" value="MYOGLOBIN"/>
    <property type="match status" value="1"/>
</dbReference>
<dbReference type="PANTHER" id="PTHR47132:SF1">
    <property type="entry name" value="MYOGLOBIN"/>
    <property type="match status" value="1"/>
</dbReference>
<dbReference type="Pfam" id="PF00042">
    <property type="entry name" value="Globin"/>
    <property type="match status" value="1"/>
</dbReference>
<dbReference type="PRINTS" id="PR00613">
    <property type="entry name" value="MYOGLOBIN"/>
</dbReference>
<dbReference type="SUPFAM" id="SSF46458">
    <property type="entry name" value="Globin-like"/>
    <property type="match status" value="1"/>
</dbReference>
<dbReference type="PROSITE" id="PS01033">
    <property type="entry name" value="GLOBIN"/>
    <property type="match status" value="1"/>
</dbReference>